<dbReference type="EC" id="1.5.1.5" evidence="1"/>
<dbReference type="EC" id="3.5.4.9" evidence="1"/>
<dbReference type="EMBL" id="CP001147">
    <property type="protein sequence ID" value="ACI20383.1"/>
    <property type="molecule type" value="Genomic_DNA"/>
</dbReference>
<dbReference type="RefSeq" id="WP_012545120.1">
    <property type="nucleotide sequence ID" value="NC_011296.1"/>
</dbReference>
<dbReference type="RefSeq" id="YP_002248516.1">
    <property type="nucleotide sequence ID" value="NC_011296.1"/>
</dbReference>
<dbReference type="SMR" id="B5YJV1"/>
<dbReference type="FunCoup" id="B5YJV1">
    <property type="interactions" value="408"/>
</dbReference>
<dbReference type="STRING" id="289376.THEYE_A0674"/>
<dbReference type="EnsemblBacteria" id="ACI20383">
    <property type="protein sequence ID" value="ACI20383"/>
    <property type="gene ID" value="THEYE_A0674"/>
</dbReference>
<dbReference type="KEGG" id="tye:THEYE_A0674"/>
<dbReference type="PATRIC" id="fig|289376.4.peg.667"/>
<dbReference type="eggNOG" id="COG0190">
    <property type="taxonomic scope" value="Bacteria"/>
</dbReference>
<dbReference type="HOGENOM" id="CLU_034045_2_1_0"/>
<dbReference type="InParanoid" id="B5YJV1"/>
<dbReference type="OrthoDB" id="9803580at2"/>
<dbReference type="UniPathway" id="UPA00193"/>
<dbReference type="Proteomes" id="UP000000718">
    <property type="component" value="Chromosome"/>
</dbReference>
<dbReference type="GO" id="GO:0005829">
    <property type="term" value="C:cytosol"/>
    <property type="evidence" value="ECO:0000318"/>
    <property type="project" value="GO_Central"/>
</dbReference>
<dbReference type="GO" id="GO:0004477">
    <property type="term" value="F:methenyltetrahydrofolate cyclohydrolase activity"/>
    <property type="evidence" value="ECO:0000318"/>
    <property type="project" value="GO_Central"/>
</dbReference>
<dbReference type="GO" id="GO:0004488">
    <property type="term" value="F:methylenetetrahydrofolate dehydrogenase (NADP+) activity"/>
    <property type="evidence" value="ECO:0000318"/>
    <property type="project" value="GO_Central"/>
</dbReference>
<dbReference type="GO" id="GO:0000105">
    <property type="term" value="P:L-histidine biosynthetic process"/>
    <property type="evidence" value="ECO:0007669"/>
    <property type="project" value="UniProtKB-KW"/>
</dbReference>
<dbReference type="GO" id="GO:0009086">
    <property type="term" value="P:methionine biosynthetic process"/>
    <property type="evidence" value="ECO:0007669"/>
    <property type="project" value="UniProtKB-KW"/>
</dbReference>
<dbReference type="GO" id="GO:0006164">
    <property type="term" value="P:purine nucleotide biosynthetic process"/>
    <property type="evidence" value="ECO:0007669"/>
    <property type="project" value="UniProtKB-KW"/>
</dbReference>
<dbReference type="GO" id="GO:0035999">
    <property type="term" value="P:tetrahydrofolate interconversion"/>
    <property type="evidence" value="ECO:0000318"/>
    <property type="project" value="GO_Central"/>
</dbReference>
<dbReference type="CDD" id="cd01080">
    <property type="entry name" value="NAD_bind_m-THF_DH_Cyclohyd"/>
    <property type="match status" value="1"/>
</dbReference>
<dbReference type="FunFam" id="3.40.50.720:FF:000094">
    <property type="entry name" value="Bifunctional protein FolD"/>
    <property type="match status" value="1"/>
</dbReference>
<dbReference type="FunFam" id="3.40.50.10860:FF:000005">
    <property type="entry name" value="C-1-tetrahydrofolate synthase, cytoplasmic, putative"/>
    <property type="match status" value="1"/>
</dbReference>
<dbReference type="Gene3D" id="3.40.50.10860">
    <property type="entry name" value="Leucine Dehydrogenase, chain A, domain 1"/>
    <property type="match status" value="1"/>
</dbReference>
<dbReference type="Gene3D" id="3.40.50.720">
    <property type="entry name" value="NAD(P)-binding Rossmann-like Domain"/>
    <property type="match status" value="1"/>
</dbReference>
<dbReference type="HAMAP" id="MF_01576">
    <property type="entry name" value="THF_DHG_CYH"/>
    <property type="match status" value="1"/>
</dbReference>
<dbReference type="InterPro" id="IPR046346">
    <property type="entry name" value="Aminoacid_DH-like_N_sf"/>
</dbReference>
<dbReference type="InterPro" id="IPR036291">
    <property type="entry name" value="NAD(P)-bd_dom_sf"/>
</dbReference>
<dbReference type="InterPro" id="IPR000672">
    <property type="entry name" value="THF_DH/CycHdrlase"/>
</dbReference>
<dbReference type="InterPro" id="IPR020630">
    <property type="entry name" value="THF_DH/CycHdrlase_cat_dom"/>
</dbReference>
<dbReference type="InterPro" id="IPR020867">
    <property type="entry name" value="THF_DH/CycHdrlase_CS"/>
</dbReference>
<dbReference type="InterPro" id="IPR020631">
    <property type="entry name" value="THF_DH/CycHdrlase_NAD-bd_dom"/>
</dbReference>
<dbReference type="NCBIfam" id="NF008058">
    <property type="entry name" value="PRK10792.1"/>
    <property type="match status" value="1"/>
</dbReference>
<dbReference type="NCBIfam" id="NF010783">
    <property type="entry name" value="PRK14186.1"/>
    <property type="match status" value="1"/>
</dbReference>
<dbReference type="PANTHER" id="PTHR48099:SF5">
    <property type="entry name" value="C-1-TETRAHYDROFOLATE SYNTHASE, CYTOPLASMIC"/>
    <property type="match status" value="1"/>
</dbReference>
<dbReference type="PANTHER" id="PTHR48099">
    <property type="entry name" value="C-1-TETRAHYDROFOLATE SYNTHASE, CYTOPLASMIC-RELATED"/>
    <property type="match status" value="1"/>
</dbReference>
<dbReference type="Pfam" id="PF00763">
    <property type="entry name" value="THF_DHG_CYH"/>
    <property type="match status" value="1"/>
</dbReference>
<dbReference type="Pfam" id="PF02882">
    <property type="entry name" value="THF_DHG_CYH_C"/>
    <property type="match status" value="1"/>
</dbReference>
<dbReference type="PRINTS" id="PR00085">
    <property type="entry name" value="THFDHDRGNASE"/>
</dbReference>
<dbReference type="SUPFAM" id="SSF53223">
    <property type="entry name" value="Aminoacid dehydrogenase-like, N-terminal domain"/>
    <property type="match status" value="1"/>
</dbReference>
<dbReference type="SUPFAM" id="SSF51735">
    <property type="entry name" value="NAD(P)-binding Rossmann-fold domains"/>
    <property type="match status" value="1"/>
</dbReference>
<dbReference type="PROSITE" id="PS00766">
    <property type="entry name" value="THF_DHG_CYH_1"/>
    <property type="match status" value="1"/>
</dbReference>
<dbReference type="PROSITE" id="PS00767">
    <property type="entry name" value="THF_DHG_CYH_2"/>
    <property type="match status" value="1"/>
</dbReference>
<reference key="1">
    <citation type="submission" date="2008-08" db="EMBL/GenBank/DDBJ databases">
        <title>The complete genome sequence of Thermodesulfovibrio yellowstonii strain ATCC 51303 / DSM 11347 / YP87.</title>
        <authorList>
            <person name="Dodson R.J."/>
            <person name="Durkin A.S."/>
            <person name="Wu M."/>
            <person name="Eisen J."/>
            <person name="Sutton G."/>
        </authorList>
    </citation>
    <scope>NUCLEOTIDE SEQUENCE [LARGE SCALE GENOMIC DNA]</scope>
    <source>
        <strain>ATCC 51303 / DSM 11347 / YP87</strain>
    </source>
</reference>
<name>FOLD_THEYD</name>
<feature type="chain" id="PRO_1000147534" description="Bifunctional protein FolD">
    <location>
        <begin position="1"/>
        <end position="286"/>
    </location>
</feature>
<feature type="binding site" evidence="1">
    <location>
        <begin position="165"/>
        <end position="167"/>
    </location>
    <ligand>
        <name>NADP(+)</name>
        <dbReference type="ChEBI" id="CHEBI:58349"/>
    </ligand>
</feature>
<feature type="binding site" evidence="1">
    <location>
        <position position="190"/>
    </location>
    <ligand>
        <name>NADP(+)</name>
        <dbReference type="ChEBI" id="CHEBI:58349"/>
    </ligand>
</feature>
<feature type="binding site" evidence="1">
    <location>
        <position position="231"/>
    </location>
    <ligand>
        <name>NADP(+)</name>
        <dbReference type="ChEBI" id="CHEBI:58349"/>
    </ligand>
</feature>
<keyword id="KW-0028">Amino-acid biosynthesis</keyword>
<keyword id="KW-0368">Histidine biosynthesis</keyword>
<keyword id="KW-0378">Hydrolase</keyword>
<keyword id="KW-0486">Methionine biosynthesis</keyword>
<keyword id="KW-0511">Multifunctional enzyme</keyword>
<keyword id="KW-0521">NADP</keyword>
<keyword id="KW-0554">One-carbon metabolism</keyword>
<keyword id="KW-0560">Oxidoreductase</keyword>
<keyword id="KW-0658">Purine biosynthesis</keyword>
<keyword id="KW-1185">Reference proteome</keyword>
<proteinExistence type="inferred from homology"/>
<evidence type="ECO:0000255" key="1">
    <source>
        <dbReference type="HAMAP-Rule" id="MF_01576"/>
    </source>
</evidence>
<accession>B5YJV1</accession>
<sequence>MSAEILDGKSLALKIKEELKKEVQDLKNQGINPCLAVVLVGENKSSQKYVSFKEKTCKELDIQSLVFKLPENTEETSLIKLIDELNENSQVNGILIQLPLPKHLNQNKVLERINPFKDVDGFTPFCLGRLLIDSPLFIPCTPKGIIRMLDEYKINLEGKQAVVIGRSIIVGKPLSLLLLKRNATVTMCHSKTINLQDITKKADILCVAIGREKFITSNMIKKGAVVIDIGINVTASGKVVGDVNFDDVKEKASYITPVPGGVGPMTIAMLMENAIYAAKLQKRVVK</sequence>
<gene>
    <name evidence="1" type="primary">folD</name>
    <name type="ordered locus">THEYE_A0674</name>
</gene>
<comment type="function">
    <text evidence="1">Catalyzes the oxidation of 5,10-methylenetetrahydrofolate to 5,10-methenyltetrahydrofolate and then the hydrolysis of 5,10-methenyltetrahydrofolate to 10-formyltetrahydrofolate.</text>
</comment>
<comment type="catalytic activity">
    <reaction evidence="1">
        <text>(6R)-5,10-methylene-5,6,7,8-tetrahydrofolate + NADP(+) = (6R)-5,10-methenyltetrahydrofolate + NADPH</text>
        <dbReference type="Rhea" id="RHEA:22812"/>
        <dbReference type="ChEBI" id="CHEBI:15636"/>
        <dbReference type="ChEBI" id="CHEBI:57455"/>
        <dbReference type="ChEBI" id="CHEBI:57783"/>
        <dbReference type="ChEBI" id="CHEBI:58349"/>
        <dbReference type="EC" id="1.5.1.5"/>
    </reaction>
</comment>
<comment type="catalytic activity">
    <reaction evidence="1">
        <text>(6R)-5,10-methenyltetrahydrofolate + H2O = (6R)-10-formyltetrahydrofolate + H(+)</text>
        <dbReference type="Rhea" id="RHEA:23700"/>
        <dbReference type="ChEBI" id="CHEBI:15377"/>
        <dbReference type="ChEBI" id="CHEBI:15378"/>
        <dbReference type="ChEBI" id="CHEBI:57455"/>
        <dbReference type="ChEBI" id="CHEBI:195366"/>
        <dbReference type="EC" id="3.5.4.9"/>
    </reaction>
</comment>
<comment type="pathway">
    <text evidence="1">One-carbon metabolism; tetrahydrofolate interconversion.</text>
</comment>
<comment type="subunit">
    <text evidence="1">Homodimer.</text>
</comment>
<comment type="similarity">
    <text evidence="1">Belongs to the tetrahydrofolate dehydrogenase/cyclohydrolase family.</text>
</comment>
<protein>
    <recommendedName>
        <fullName evidence="1">Bifunctional protein FolD</fullName>
    </recommendedName>
    <domain>
        <recommendedName>
            <fullName evidence="1">Methylenetetrahydrofolate dehydrogenase</fullName>
            <ecNumber evidence="1">1.5.1.5</ecNumber>
        </recommendedName>
    </domain>
    <domain>
        <recommendedName>
            <fullName evidence="1">Methenyltetrahydrofolate cyclohydrolase</fullName>
            <ecNumber evidence="1">3.5.4.9</ecNumber>
        </recommendedName>
    </domain>
</protein>
<organism>
    <name type="scientific">Thermodesulfovibrio yellowstonii (strain ATCC 51303 / DSM 11347 / YP87)</name>
    <dbReference type="NCBI Taxonomy" id="289376"/>
    <lineage>
        <taxon>Bacteria</taxon>
        <taxon>Pseudomonadati</taxon>
        <taxon>Nitrospirota</taxon>
        <taxon>Thermodesulfovibrionia</taxon>
        <taxon>Thermodesulfovibrionales</taxon>
        <taxon>Thermodesulfovibrionaceae</taxon>
        <taxon>Thermodesulfovibrio</taxon>
    </lineage>
</organism>